<reference key="1">
    <citation type="journal article" date="2011" name="J. Bacteriol.">
        <title>Comparative genomics of 28 Salmonella enterica isolates: evidence for CRISPR-mediated adaptive sublineage evolution.</title>
        <authorList>
            <person name="Fricke W.F."/>
            <person name="Mammel M.K."/>
            <person name="McDermott P.F."/>
            <person name="Tartera C."/>
            <person name="White D.G."/>
            <person name="Leclerc J.E."/>
            <person name="Ravel J."/>
            <person name="Cebula T.A."/>
        </authorList>
    </citation>
    <scope>NUCLEOTIDE SEQUENCE [LARGE SCALE GENOMIC DNA]</scope>
    <source>
        <strain>SL254</strain>
    </source>
</reference>
<evidence type="ECO:0000255" key="1">
    <source>
        <dbReference type="HAMAP-Rule" id="MF_01523"/>
    </source>
</evidence>
<comment type="function">
    <text evidence="1">Specifically methylates the guanosine in position 1516 of 16S rRNA.</text>
</comment>
<comment type="catalytic activity">
    <reaction evidence="1">
        <text>guanosine(1516) in 16S rRNA + S-adenosyl-L-methionine = N(2)-methylguanosine(1516) in 16S rRNA + S-adenosyl-L-homocysteine + H(+)</text>
        <dbReference type="Rhea" id="RHEA:43220"/>
        <dbReference type="Rhea" id="RHEA-COMP:10412"/>
        <dbReference type="Rhea" id="RHEA-COMP:10413"/>
        <dbReference type="ChEBI" id="CHEBI:15378"/>
        <dbReference type="ChEBI" id="CHEBI:57856"/>
        <dbReference type="ChEBI" id="CHEBI:59789"/>
        <dbReference type="ChEBI" id="CHEBI:74269"/>
        <dbReference type="ChEBI" id="CHEBI:74481"/>
        <dbReference type="EC" id="2.1.1.242"/>
    </reaction>
</comment>
<comment type="subcellular location">
    <subcellularLocation>
        <location evidence="1">Cytoplasm</location>
    </subcellularLocation>
</comment>
<comment type="similarity">
    <text evidence="1">Belongs to the methyltransferase superfamily. RsmJ family.</text>
</comment>
<gene>
    <name evidence="1" type="primary">rsmJ</name>
    <name type="synonym">yhiQ</name>
    <name type="ordered locus">SNSL254_A3863</name>
</gene>
<protein>
    <recommendedName>
        <fullName evidence="1">Ribosomal RNA small subunit methyltransferase J</fullName>
        <ecNumber evidence="1">2.1.1.242</ecNumber>
    </recommendedName>
    <alternativeName>
        <fullName evidence="1">16S rRNA m2G1516 methyltransferase</fullName>
    </alternativeName>
    <alternativeName>
        <fullName evidence="1">rRNA (guanine-N(2)-)-methyltransferase</fullName>
    </alternativeName>
</protein>
<accession>B4SWD9</accession>
<name>RSMJ_SALNS</name>
<proteinExistence type="inferred from homology"/>
<organism>
    <name type="scientific">Salmonella newport (strain SL254)</name>
    <dbReference type="NCBI Taxonomy" id="423368"/>
    <lineage>
        <taxon>Bacteria</taxon>
        <taxon>Pseudomonadati</taxon>
        <taxon>Pseudomonadota</taxon>
        <taxon>Gammaproteobacteria</taxon>
        <taxon>Enterobacterales</taxon>
        <taxon>Enterobacteriaceae</taxon>
        <taxon>Salmonella</taxon>
    </lineage>
</organism>
<feature type="chain" id="PRO_1000198511" description="Ribosomal RNA small subunit methyltransferase J">
    <location>
        <begin position="1"/>
        <end position="252"/>
    </location>
</feature>
<feature type="binding site" evidence="1">
    <location>
        <begin position="101"/>
        <end position="102"/>
    </location>
    <ligand>
        <name>S-adenosyl-L-methionine</name>
        <dbReference type="ChEBI" id="CHEBI:59789"/>
    </ligand>
</feature>
<feature type="binding site" evidence="1">
    <location>
        <begin position="117"/>
        <end position="118"/>
    </location>
    <ligand>
        <name>S-adenosyl-L-methionine</name>
        <dbReference type="ChEBI" id="CHEBI:59789"/>
    </ligand>
</feature>
<feature type="binding site" evidence="1">
    <location>
        <begin position="153"/>
        <end position="154"/>
    </location>
    <ligand>
        <name>S-adenosyl-L-methionine</name>
        <dbReference type="ChEBI" id="CHEBI:59789"/>
    </ligand>
</feature>
<feature type="binding site" evidence="1">
    <location>
        <position position="171"/>
    </location>
    <ligand>
        <name>S-adenosyl-L-methionine</name>
        <dbReference type="ChEBI" id="CHEBI:59789"/>
    </ligand>
</feature>
<sequence length="252" mass="27282">MQICLMDETGATDGALSVLAARWGLEHDEDNPMALVLTPQHLELRKRDEPKLGGIFVDFVGGAMAHRRKFGGGRGEAVAKAVGIKGDYLPDVVDATAGLGRDAFVLASVGCRVRMLERNPVVAALLDDGLTRGYADADIGGWLQERLQLIHASSLTALTDITPRPQVVYLDPMFPHRQKSALVKKEMRVFQSLVGPDLDADGLLEPARQLATKRVVVKRPDYAPPLADVATPNAIVTKGHRFDIYAGTPLTE</sequence>
<dbReference type="EC" id="2.1.1.242" evidence="1"/>
<dbReference type="EMBL" id="CP001113">
    <property type="protein sequence ID" value="ACF62181.1"/>
    <property type="molecule type" value="Genomic_DNA"/>
</dbReference>
<dbReference type="RefSeq" id="WP_001165127.1">
    <property type="nucleotide sequence ID" value="NZ_CCMR01000004.1"/>
</dbReference>
<dbReference type="SMR" id="B4SWD9"/>
<dbReference type="KEGG" id="see:SNSL254_A3863"/>
<dbReference type="HOGENOM" id="CLU_076324_0_0_6"/>
<dbReference type="Proteomes" id="UP000008824">
    <property type="component" value="Chromosome"/>
</dbReference>
<dbReference type="GO" id="GO:0005737">
    <property type="term" value="C:cytoplasm"/>
    <property type="evidence" value="ECO:0007669"/>
    <property type="project" value="UniProtKB-SubCell"/>
</dbReference>
<dbReference type="GO" id="GO:0008990">
    <property type="term" value="F:rRNA (guanine-N2-)-methyltransferase activity"/>
    <property type="evidence" value="ECO:0007669"/>
    <property type="project" value="UniProtKB-UniRule"/>
</dbReference>
<dbReference type="CDD" id="cd02440">
    <property type="entry name" value="AdoMet_MTases"/>
    <property type="match status" value="1"/>
</dbReference>
<dbReference type="FunFam" id="3.40.1630.10:FF:000001">
    <property type="entry name" value="Ribosomal RNA small subunit methyltransferase J"/>
    <property type="match status" value="1"/>
</dbReference>
<dbReference type="FunFam" id="3.40.50.150:FF:000072">
    <property type="entry name" value="Ribosomal RNA small subunit methyltransferase J"/>
    <property type="match status" value="1"/>
</dbReference>
<dbReference type="Gene3D" id="3.40.50.150">
    <property type="entry name" value="Vaccinia Virus protein VP39"/>
    <property type="match status" value="1"/>
</dbReference>
<dbReference type="Gene3D" id="3.40.1630.10">
    <property type="entry name" value="YhiQ-like domain"/>
    <property type="match status" value="1"/>
</dbReference>
<dbReference type="HAMAP" id="MF_01523">
    <property type="entry name" value="16SrRNA_methyltr_J"/>
    <property type="match status" value="1"/>
</dbReference>
<dbReference type="InterPro" id="IPR007536">
    <property type="entry name" value="16SrRNA_methylTrfase_J"/>
</dbReference>
<dbReference type="InterPro" id="IPR029063">
    <property type="entry name" value="SAM-dependent_MTases_sf"/>
</dbReference>
<dbReference type="NCBIfam" id="NF008012">
    <property type="entry name" value="PRK10742.1"/>
    <property type="match status" value="1"/>
</dbReference>
<dbReference type="PANTHER" id="PTHR36112">
    <property type="entry name" value="RIBOSOMAL RNA SMALL SUBUNIT METHYLTRANSFERASE J"/>
    <property type="match status" value="1"/>
</dbReference>
<dbReference type="PANTHER" id="PTHR36112:SF1">
    <property type="entry name" value="RIBOSOMAL RNA SMALL SUBUNIT METHYLTRANSFERASE J"/>
    <property type="match status" value="1"/>
</dbReference>
<dbReference type="Pfam" id="PF04445">
    <property type="entry name" value="SAM_MT"/>
    <property type="match status" value="1"/>
</dbReference>
<dbReference type="SUPFAM" id="SSF53335">
    <property type="entry name" value="S-adenosyl-L-methionine-dependent methyltransferases"/>
    <property type="match status" value="1"/>
</dbReference>
<keyword id="KW-0963">Cytoplasm</keyword>
<keyword id="KW-0489">Methyltransferase</keyword>
<keyword id="KW-0698">rRNA processing</keyword>
<keyword id="KW-0949">S-adenosyl-L-methionine</keyword>
<keyword id="KW-0808">Transferase</keyword>